<organism>
    <name type="scientific">Mesomycoplasma hyopneumoniae (strain 232)</name>
    <name type="common">Mycoplasma hyopneumoniae</name>
    <dbReference type="NCBI Taxonomy" id="295358"/>
    <lineage>
        <taxon>Bacteria</taxon>
        <taxon>Bacillati</taxon>
        <taxon>Mycoplasmatota</taxon>
        <taxon>Mycoplasmoidales</taxon>
        <taxon>Metamycoplasmataceae</taxon>
        <taxon>Mesomycoplasma</taxon>
    </lineage>
</organism>
<proteinExistence type="inferred from homology"/>
<protein>
    <recommendedName>
        <fullName evidence="1">Guanylate kinase</fullName>
        <ecNumber evidence="1">2.7.4.8</ecNumber>
    </recommendedName>
    <alternativeName>
        <fullName evidence="1">GMP kinase</fullName>
    </alternativeName>
</protein>
<gene>
    <name evidence="1" type="primary">gmk</name>
    <name type="ordered locus">mhp229</name>
</gene>
<dbReference type="EC" id="2.7.4.8" evidence="1"/>
<dbReference type="EMBL" id="AE017332">
    <property type="protein sequence ID" value="AAV27478.1"/>
    <property type="molecule type" value="Genomic_DNA"/>
</dbReference>
<dbReference type="RefSeq" id="WP_011206066.1">
    <property type="nucleotide sequence ID" value="NC_006360.1"/>
</dbReference>
<dbReference type="SMR" id="Q601H3"/>
<dbReference type="GeneID" id="41334451"/>
<dbReference type="KEGG" id="mhy:mhp229"/>
<dbReference type="eggNOG" id="COG0194">
    <property type="taxonomic scope" value="Bacteria"/>
</dbReference>
<dbReference type="HOGENOM" id="CLU_001715_1_1_14"/>
<dbReference type="PhylomeDB" id="Q601H3"/>
<dbReference type="Proteomes" id="UP000006822">
    <property type="component" value="Chromosome"/>
</dbReference>
<dbReference type="GO" id="GO:0005829">
    <property type="term" value="C:cytosol"/>
    <property type="evidence" value="ECO:0007669"/>
    <property type="project" value="TreeGrafter"/>
</dbReference>
<dbReference type="GO" id="GO:0005524">
    <property type="term" value="F:ATP binding"/>
    <property type="evidence" value="ECO:0007669"/>
    <property type="project" value="UniProtKB-UniRule"/>
</dbReference>
<dbReference type="GO" id="GO:0004385">
    <property type="term" value="F:guanylate kinase activity"/>
    <property type="evidence" value="ECO:0007669"/>
    <property type="project" value="UniProtKB-UniRule"/>
</dbReference>
<dbReference type="CDD" id="cd00071">
    <property type="entry name" value="GMPK"/>
    <property type="match status" value="1"/>
</dbReference>
<dbReference type="FunFam" id="3.30.63.10:FF:000005">
    <property type="entry name" value="Guanylate kinase"/>
    <property type="match status" value="1"/>
</dbReference>
<dbReference type="Gene3D" id="3.30.63.10">
    <property type="entry name" value="Guanylate Kinase phosphate binding domain"/>
    <property type="match status" value="1"/>
</dbReference>
<dbReference type="Gene3D" id="3.40.50.300">
    <property type="entry name" value="P-loop containing nucleotide triphosphate hydrolases"/>
    <property type="match status" value="1"/>
</dbReference>
<dbReference type="HAMAP" id="MF_00328">
    <property type="entry name" value="Guanylate_kinase"/>
    <property type="match status" value="1"/>
</dbReference>
<dbReference type="InterPro" id="IPR008145">
    <property type="entry name" value="GK/Ca_channel_bsu"/>
</dbReference>
<dbReference type="InterPro" id="IPR008144">
    <property type="entry name" value="Guanylate_kin-like_dom"/>
</dbReference>
<dbReference type="InterPro" id="IPR017665">
    <property type="entry name" value="Guanylate_kinase"/>
</dbReference>
<dbReference type="InterPro" id="IPR020590">
    <property type="entry name" value="Guanylate_kinase_CS"/>
</dbReference>
<dbReference type="InterPro" id="IPR027417">
    <property type="entry name" value="P-loop_NTPase"/>
</dbReference>
<dbReference type="NCBIfam" id="TIGR03263">
    <property type="entry name" value="guanyl_kin"/>
    <property type="match status" value="1"/>
</dbReference>
<dbReference type="PANTHER" id="PTHR23117:SF13">
    <property type="entry name" value="GUANYLATE KINASE"/>
    <property type="match status" value="1"/>
</dbReference>
<dbReference type="PANTHER" id="PTHR23117">
    <property type="entry name" value="GUANYLATE KINASE-RELATED"/>
    <property type="match status" value="1"/>
</dbReference>
<dbReference type="Pfam" id="PF00625">
    <property type="entry name" value="Guanylate_kin"/>
    <property type="match status" value="1"/>
</dbReference>
<dbReference type="SMART" id="SM00072">
    <property type="entry name" value="GuKc"/>
    <property type="match status" value="1"/>
</dbReference>
<dbReference type="SUPFAM" id="SSF52540">
    <property type="entry name" value="P-loop containing nucleoside triphosphate hydrolases"/>
    <property type="match status" value="1"/>
</dbReference>
<dbReference type="PROSITE" id="PS00856">
    <property type="entry name" value="GUANYLATE_KINASE_1"/>
    <property type="match status" value="1"/>
</dbReference>
<dbReference type="PROSITE" id="PS50052">
    <property type="entry name" value="GUANYLATE_KINASE_2"/>
    <property type="match status" value="1"/>
</dbReference>
<name>KGUA_MESH2</name>
<accession>Q601H3</accession>
<comment type="function">
    <text evidence="1">Essential for recycling GMP and indirectly, cGMP.</text>
</comment>
<comment type="catalytic activity">
    <reaction evidence="1">
        <text>GMP + ATP = GDP + ADP</text>
        <dbReference type="Rhea" id="RHEA:20780"/>
        <dbReference type="ChEBI" id="CHEBI:30616"/>
        <dbReference type="ChEBI" id="CHEBI:58115"/>
        <dbReference type="ChEBI" id="CHEBI:58189"/>
        <dbReference type="ChEBI" id="CHEBI:456216"/>
        <dbReference type="EC" id="2.7.4.8"/>
    </reaction>
</comment>
<comment type="subcellular location">
    <subcellularLocation>
        <location evidence="1">Cytoplasm</location>
    </subcellularLocation>
</comment>
<comment type="similarity">
    <text evidence="1">Belongs to the guanylate kinase family.</text>
</comment>
<keyword id="KW-0067">ATP-binding</keyword>
<keyword id="KW-0963">Cytoplasm</keyword>
<keyword id="KW-0418">Kinase</keyword>
<keyword id="KW-0547">Nucleotide-binding</keyword>
<keyword id="KW-0808">Transferase</keyword>
<feature type="chain" id="PRO_0000170563" description="Guanylate kinase">
    <location>
        <begin position="1"/>
        <end position="197"/>
    </location>
</feature>
<feature type="domain" description="Guanylate kinase-like" evidence="1">
    <location>
        <begin position="6"/>
        <end position="191"/>
    </location>
</feature>
<feature type="binding site" evidence="1">
    <location>
        <begin position="13"/>
        <end position="20"/>
    </location>
    <ligand>
        <name>ATP</name>
        <dbReference type="ChEBI" id="CHEBI:30616"/>
    </ligand>
</feature>
<reference key="1">
    <citation type="journal article" date="2004" name="J. Bacteriol.">
        <title>The genome sequence of Mycoplasma hyopneumoniae strain 232, the agent of swine mycoplasmosis.</title>
        <authorList>
            <person name="Minion F.C."/>
            <person name="Lefkowitz E.J."/>
            <person name="Madsen M.L."/>
            <person name="Cleary B.J."/>
            <person name="Swartzell S.M."/>
            <person name="Mahairas G.G."/>
        </authorList>
    </citation>
    <scope>NUCLEOTIDE SEQUENCE [LARGE SCALE GENOMIC DNA]</scope>
    <source>
        <strain>232</strain>
    </source>
</reference>
<sequence>MKVKMSKLIILSGPSGVGKGTIESLLLKNKNLLIKLAISATTREKRRDEINGVNYFFLTVQEFKEKIENDEFIEWSCHFNNYYGTLKSQIKFIQSQNFIPLLEIDTTGAKNIIENYKNKGELSQLLTIFILPPSIESLKNRIQKRLTETNIQINQRLEKAKAEIKIKNLFKFQVVNDNLEECVAQIEKIISKEIQKT</sequence>
<evidence type="ECO:0000255" key="1">
    <source>
        <dbReference type="HAMAP-Rule" id="MF_00328"/>
    </source>
</evidence>